<sequence>MASILNQTQELQEASKVLGHVRCENFFIFPGENTLSDGLRGVLYFLGLAYCFIGLSAITARFFKSMENVVKHSRKVVAIDPITKAEIITYKKVWNFTIADISLLAFGTSFPQISLATIDAIRNIGERYAGGLGPGTLVGSAAFDLFPIHAVCVVVPKAGELKKISDLGVWLVELVWSFWAYIWLYIILEVWSPNVITLVEALLTVLQYGLLLVHAYAQDKRWPYLSLPMSRGDRPEEWVPEEIDTSKDDNDNDVHDVYSDAAQEAVESGSRNIVDIFSIHSANNDTGITYHTVADTPPDSATKKGKAKNSSVFDIWKHQFVDAITLETSESKKVDSIYLRIANSFWQLLLAPWKLLFAFVPPCNIAHGWIAFIFSLLFISGVAFVVTRFTDLISCVTGINPYVIAFTALASGTSWPDLVASKIAAERQLTADSAIANITCSNSVNIYVGIGVPWLINTVYNYFAYREPLYIENAKGLSFSLLIFFATSVGCIVVLVLRRLIIGAELGGPRLWAWLTSAYFMMLWVVFVVLSSLKVSGVI</sequence>
<organism>
    <name type="scientific">Arabidopsis halleri subsp. halleri</name>
    <name type="common">Arabis halleri</name>
    <dbReference type="NCBI Taxonomy" id="81971"/>
    <lineage>
        <taxon>Eukaryota</taxon>
        <taxon>Viridiplantae</taxon>
        <taxon>Streptophyta</taxon>
        <taxon>Embryophyta</taxon>
        <taxon>Tracheophyta</taxon>
        <taxon>Spermatophyta</taxon>
        <taxon>Magnoliopsida</taxon>
        <taxon>eudicotyledons</taxon>
        <taxon>Gunneridae</taxon>
        <taxon>Pentapetalae</taxon>
        <taxon>rosids</taxon>
        <taxon>malvids</taxon>
        <taxon>Brassicales</taxon>
        <taxon>Brassicaceae</taxon>
        <taxon>Camelineae</taxon>
        <taxon>Arabidopsis</taxon>
    </lineage>
</organism>
<proteinExistence type="evidence at protein level"/>
<evidence type="ECO:0000250" key="1"/>
<evidence type="ECO:0000255" key="2"/>
<evidence type="ECO:0000269" key="3">
    <source>
    </source>
</evidence>
<evidence type="ECO:0000305" key="4"/>
<accession>B8K1V7</accession>
<reference key="1">
    <citation type="journal article" date="2006" name="Plant Cell Environ.">
        <title>High expression in leaves of the zinc hyperaccumulator Arabidopsis halleri of AhMHX, a homolog of an Arabidopsis thaliana vacuolar metal/proton exchanger.</title>
        <authorList>
            <person name="Elbaz B."/>
            <person name="Shoshani-Knaani N."/>
            <person name="David-Assael O."/>
            <person name="Mizrachy-Dagri T."/>
            <person name="Mizrahi K."/>
            <person name="Saul H."/>
            <person name="Brook E."/>
            <person name="Berezin I."/>
            <person name="Shaul O."/>
        </authorList>
    </citation>
    <scope>NUCLEOTIDE SEQUENCE [MRNA]</scope>
    <scope>TISSUE SPECIFICITY</scope>
    <scope>SUBCELLULAR LOCATION</scope>
    <scope>FUNCTION</scope>
</reference>
<comment type="function">
    <text evidence="3">Vacuolar transporter that exchanges protons with Mg(2+), Zn(2+) and Fe(2+) ions. May control the partitioning of Mg(2+) and Zn(2+) between plant organs. Could play a role in Zn(2+) accumulation or tolerance.</text>
</comment>
<comment type="subcellular location">
    <subcellularLocation>
        <location evidence="1">Vacuole membrane</location>
        <topology evidence="1">Multi-pass membrane protein</topology>
    </subcellularLocation>
</comment>
<comment type="tissue specificity">
    <text evidence="3">High expression in leaves (at protein level).</text>
</comment>
<comment type="similarity">
    <text evidence="4">Belongs to the Ca(2+):cation antiporter (CaCA) (TC 2.A.19) family. MHX subfamily.</text>
</comment>
<name>MHX_ARAHH</name>
<gene>
    <name type="primary">MHX</name>
</gene>
<dbReference type="EMBL" id="DQ118861">
    <property type="protein sequence ID" value="AAZ68034.1"/>
    <property type="molecule type" value="mRNA"/>
</dbReference>
<dbReference type="GO" id="GO:0005774">
    <property type="term" value="C:vacuolar membrane"/>
    <property type="evidence" value="ECO:0007669"/>
    <property type="project" value="UniProtKB-SubCell"/>
</dbReference>
<dbReference type="GO" id="GO:0030001">
    <property type="term" value="P:metal ion transport"/>
    <property type="evidence" value="ECO:0007669"/>
    <property type="project" value="TreeGrafter"/>
</dbReference>
<dbReference type="GO" id="GO:0055085">
    <property type="term" value="P:transmembrane transport"/>
    <property type="evidence" value="ECO:0007669"/>
    <property type="project" value="InterPro"/>
</dbReference>
<dbReference type="Gene3D" id="1.20.1420.30">
    <property type="entry name" value="NCX, central ion-binding region"/>
    <property type="match status" value="2"/>
</dbReference>
<dbReference type="InterPro" id="IPR051171">
    <property type="entry name" value="CaCA"/>
</dbReference>
<dbReference type="InterPro" id="IPR004837">
    <property type="entry name" value="NaCa_Exmemb"/>
</dbReference>
<dbReference type="InterPro" id="IPR044880">
    <property type="entry name" value="NCX_ion-bd_dom_sf"/>
</dbReference>
<dbReference type="PANTHER" id="PTHR11878:SF65">
    <property type="entry name" value="NA_CA-EXCHANGE PROTEIN, ISOFORM G"/>
    <property type="match status" value="1"/>
</dbReference>
<dbReference type="PANTHER" id="PTHR11878">
    <property type="entry name" value="SODIUM/CALCIUM EXCHANGER"/>
    <property type="match status" value="1"/>
</dbReference>
<dbReference type="Pfam" id="PF01699">
    <property type="entry name" value="Na_Ca_ex"/>
    <property type="match status" value="2"/>
</dbReference>
<feature type="chain" id="PRO_0000416776" description="Magnesium/proton exchanger">
    <location>
        <begin position="1"/>
        <end position="539"/>
    </location>
</feature>
<feature type="transmembrane region" description="Helical" evidence="2">
    <location>
        <begin position="38"/>
        <end position="58"/>
    </location>
</feature>
<feature type="transmembrane region" description="Helical" evidence="2">
    <location>
        <begin position="98"/>
        <end position="118"/>
    </location>
</feature>
<feature type="transmembrane region" description="Helical" evidence="2">
    <location>
        <begin position="135"/>
        <end position="155"/>
    </location>
</feature>
<feature type="transmembrane region" description="Helical" evidence="2">
    <location>
        <begin position="167"/>
        <end position="187"/>
    </location>
</feature>
<feature type="transmembrane region" description="Helical" evidence="2">
    <location>
        <begin position="195"/>
        <end position="215"/>
    </location>
</feature>
<feature type="transmembrane region" description="Helical" evidence="2">
    <location>
        <begin position="341"/>
        <end position="361"/>
    </location>
</feature>
<feature type="transmembrane region" description="Helical" evidence="2">
    <location>
        <begin position="365"/>
        <end position="385"/>
    </location>
</feature>
<feature type="transmembrane region" description="Helical" evidence="2">
    <location>
        <begin position="392"/>
        <end position="412"/>
    </location>
</feature>
<feature type="transmembrane region" description="Helical" evidence="2">
    <location>
        <begin position="444"/>
        <end position="464"/>
    </location>
</feature>
<feature type="transmembrane region" description="Helical" evidence="2">
    <location>
        <begin position="477"/>
        <end position="497"/>
    </location>
</feature>
<feature type="transmembrane region" description="Helical" evidence="2">
    <location>
        <begin position="511"/>
        <end position="531"/>
    </location>
</feature>
<protein>
    <recommendedName>
        <fullName>Magnesium/proton exchanger</fullName>
    </recommendedName>
    <alternativeName>
        <fullName>Mg(2+)/H(+) exchanger</fullName>
        <shortName>AhMHX</shortName>
    </alternativeName>
    <alternativeName>
        <fullName>Zinc/proton exchanger</fullName>
    </alternativeName>
    <alternativeName>
        <fullName>Zn(2+)/H(+) exchanger</fullName>
    </alternativeName>
</protein>
<keyword id="KW-0406">Ion transport</keyword>
<keyword id="KW-0472">Membrane</keyword>
<keyword id="KW-0812">Transmembrane</keyword>
<keyword id="KW-1133">Transmembrane helix</keyword>
<keyword id="KW-0813">Transport</keyword>
<keyword id="KW-0926">Vacuole</keyword>